<feature type="chain" id="PRO_0000175204" description="Coproporphyrin III ferrochelatase">
    <location>
        <begin position="1"/>
        <end position="307"/>
    </location>
</feature>
<feature type="binding site" description="axial binding residue" evidence="1">
    <location>
        <position position="12"/>
    </location>
    <ligand>
        <name>Fe-coproporphyrin III</name>
        <dbReference type="ChEBI" id="CHEBI:68438"/>
    </ligand>
    <ligandPart>
        <name>Fe</name>
        <dbReference type="ChEBI" id="CHEBI:18248"/>
    </ligandPart>
</feature>
<feature type="binding site" evidence="1">
    <location>
        <position position="29"/>
    </location>
    <ligand>
        <name>Fe-coproporphyrin III</name>
        <dbReference type="ChEBI" id="CHEBI:68438"/>
    </ligand>
</feature>
<feature type="binding site" evidence="1">
    <location>
        <begin position="45"/>
        <end position="46"/>
    </location>
    <ligand>
        <name>Fe-coproporphyrin III</name>
        <dbReference type="ChEBI" id="CHEBI:68438"/>
    </ligand>
</feature>
<feature type="binding site" evidence="1">
    <location>
        <position position="53"/>
    </location>
    <ligand>
        <name>Fe-coproporphyrin III</name>
        <dbReference type="ChEBI" id="CHEBI:68438"/>
    </ligand>
</feature>
<feature type="binding site" evidence="1">
    <location>
        <position position="124"/>
    </location>
    <ligand>
        <name>Fe-coproporphyrin III</name>
        <dbReference type="ChEBI" id="CHEBI:68438"/>
    </ligand>
</feature>
<feature type="binding site" evidence="1">
    <location>
        <position position="181"/>
    </location>
    <ligand>
        <name>Fe(2+)</name>
        <dbReference type="ChEBI" id="CHEBI:29033"/>
    </ligand>
</feature>
<feature type="binding site" evidence="1">
    <location>
        <position position="263"/>
    </location>
    <ligand>
        <name>Fe(2+)</name>
        <dbReference type="ChEBI" id="CHEBI:29033"/>
    </ligand>
</feature>
<dbReference type="EC" id="4.99.1.9" evidence="1"/>
<dbReference type="EMBL" id="BX571856">
    <property type="protein sequence ID" value="CAG40910.1"/>
    <property type="molecule type" value="Genomic_DNA"/>
</dbReference>
<dbReference type="SMR" id="Q6GFM4"/>
<dbReference type="KEGG" id="sar:SAR1924"/>
<dbReference type="HOGENOM" id="CLU_018884_2_1_9"/>
<dbReference type="UniPathway" id="UPA00252"/>
<dbReference type="Proteomes" id="UP000000596">
    <property type="component" value="Chromosome"/>
</dbReference>
<dbReference type="GO" id="GO:0005737">
    <property type="term" value="C:cytoplasm"/>
    <property type="evidence" value="ECO:0007669"/>
    <property type="project" value="UniProtKB-SubCell"/>
</dbReference>
<dbReference type="GO" id="GO:0004325">
    <property type="term" value="F:ferrochelatase activity"/>
    <property type="evidence" value="ECO:0007669"/>
    <property type="project" value="UniProtKB-UniRule"/>
</dbReference>
<dbReference type="GO" id="GO:0046872">
    <property type="term" value="F:metal ion binding"/>
    <property type="evidence" value="ECO:0007669"/>
    <property type="project" value="UniProtKB-KW"/>
</dbReference>
<dbReference type="GO" id="GO:0006783">
    <property type="term" value="P:heme biosynthetic process"/>
    <property type="evidence" value="ECO:0007669"/>
    <property type="project" value="UniProtKB-UniRule"/>
</dbReference>
<dbReference type="CDD" id="cd00419">
    <property type="entry name" value="Ferrochelatase_C"/>
    <property type="match status" value="1"/>
</dbReference>
<dbReference type="CDD" id="cd03411">
    <property type="entry name" value="Ferrochelatase_N"/>
    <property type="match status" value="1"/>
</dbReference>
<dbReference type="FunFam" id="3.40.50.1400:FF:000009">
    <property type="entry name" value="Ferrochelatase"/>
    <property type="match status" value="1"/>
</dbReference>
<dbReference type="Gene3D" id="3.40.50.1400">
    <property type="match status" value="2"/>
</dbReference>
<dbReference type="HAMAP" id="MF_00323">
    <property type="entry name" value="Ferrochelatase"/>
    <property type="match status" value="1"/>
</dbReference>
<dbReference type="InterPro" id="IPR001015">
    <property type="entry name" value="Ferrochelatase"/>
</dbReference>
<dbReference type="InterPro" id="IPR019772">
    <property type="entry name" value="Ferrochelatase_AS"/>
</dbReference>
<dbReference type="InterPro" id="IPR033644">
    <property type="entry name" value="Ferrochelatase_C"/>
</dbReference>
<dbReference type="InterPro" id="IPR033659">
    <property type="entry name" value="Ferrochelatase_N"/>
</dbReference>
<dbReference type="NCBIfam" id="TIGR00109">
    <property type="entry name" value="hemH"/>
    <property type="match status" value="1"/>
</dbReference>
<dbReference type="NCBIfam" id="NF009095">
    <property type="entry name" value="PRK12435.1"/>
    <property type="match status" value="1"/>
</dbReference>
<dbReference type="PANTHER" id="PTHR11108">
    <property type="entry name" value="FERROCHELATASE"/>
    <property type="match status" value="1"/>
</dbReference>
<dbReference type="PANTHER" id="PTHR11108:SF1">
    <property type="entry name" value="FERROCHELATASE, MITOCHONDRIAL"/>
    <property type="match status" value="1"/>
</dbReference>
<dbReference type="Pfam" id="PF00762">
    <property type="entry name" value="Ferrochelatase"/>
    <property type="match status" value="1"/>
</dbReference>
<dbReference type="SUPFAM" id="SSF53800">
    <property type="entry name" value="Chelatase"/>
    <property type="match status" value="1"/>
</dbReference>
<dbReference type="PROSITE" id="PS00534">
    <property type="entry name" value="FERROCHELATASE"/>
    <property type="match status" value="1"/>
</dbReference>
<gene>
    <name evidence="1" type="primary">cpfC</name>
    <name type="synonym">hemF</name>
    <name type="ordered locus">SAR1924</name>
</gene>
<organism>
    <name type="scientific">Staphylococcus aureus (strain MRSA252)</name>
    <dbReference type="NCBI Taxonomy" id="282458"/>
    <lineage>
        <taxon>Bacteria</taxon>
        <taxon>Bacillati</taxon>
        <taxon>Bacillota</taxon>
        <taxon>Bacilli</taxon>
        <taxon>Bacillales</taxon>
        <taxon>Staphylococcaceae</taxon>
        <taxon>Staphylococcus</taxon>
    </lineage>
</organism>
<evidence type="ECO:0000255" key="1">
    <source>
        <dbReference type="HAMAP-Rule" id="MF_00323"/>
    </source>
</evidence>
<proteinExistence type="inferred from homology"/>
<accession>Q6GFM4</accession>
<reference key="1">
    <citation type="journal article" date="2004" name="Proc. Natl. Acad. Sci. U.S.A.">
        <title>Complete genomes of two clinical Staphylococcus aureus strains: evidence for the rapid evolution of virulence and drug resistance.</title>
        <authorList>
            <person name="Holden M.T.G."/>
            <person name="Feil E.J."/>
            <person name="Lindsay J.A."/>
            <person name="Peacock S.J."/>
            <person name="Day N.P.J."/>
            <person name="Enright M.C."/>
            <person name="Foster T.J."/>
            <person name="Moore C.E."/>
            <person name="Hurst L."/>
            <person name="Atkin R."/>
            <person name="Barron A."/>
            <person name="Bason N."/>
            <person name="Bentley S.D."/>
            <person name="Chillingworth C."/>
            <person name="Chillingworth T."/>
            <person name="Churcher C."/>
            <person name="Clark L."/>
            <person name="Corton C."/>
            <person name="Cronin A."/>
            <person name="Doggett J."/>
            <person name="Dowd L."/>
            <person name="Feltwell T."/>
            <person name="Hance Z."/>
            <person name="Harris B."/>
            <person name="Hauser H."/>
            <person name="Holroyd S."/>
            <person name="Jagels K."/>
            <person name="James K.D."/>
            <person name="Lennard N."/>
            <person name="Line A."/>
            <person name="Mayes R."/>
            <person name="Moule S."/>
            <person name="Mungall K."/>
            <person name="Ormond D."/>
            <person name="Quail M.A."/>
            <person name="Rabbinowitsch E."/>
            <person name="Rutherford K.M."/>
            <person name="Sanders M."/>
            <person name="Sharp S."/>
            <person name="Simmonds M."/>
            <person name="Stevens K."/>
            <person name="Whitehead S."/>
            <person name="Barrell B.G."/>
            <person name="Spratt B.G."/>
            <person name="Parkhill J."/>
        </authorList>
    </citation>
    <scope>NUCLEOTIDE SEQUENCE [LARGE SCALE GENOMIC DNA]</scope>
    <source>
        <strain>MRSA252</strain>
    </source>
</reference>
<comment type="function">
    <text evidence="1">Involved in coproporphyrin-dependent heme b biosynthesis. Catalyzes the insertion of ferrous iron into coproporphyrin III to form Fe-coproporphyrin III.</text>
</comment>
<comment type="catalytic activity">
    <reaction evidence="1">
        <text>Fe-coproporphyrin III + 2 H(+) = coproporphyrin III + Fe(2+)</text>
        <dbReference type="Rhea" id="RHEA:49572"/>
        <dbReference type="ChEBI" id="CHEBI:15378"/>
        <dbReference type="ChEBI" id="CHEBI:29033"/>
        <dbReference type="ChEBI" id="CHEBI:68438"/>
        <dbReference type="ChEBI" id="CHEBI:131725"/>
        <dbReference type="EC" id="4.99.1.9"/>
    </reaction>
    <physiologicalReaction direction="right-to-left" evidence="1">
        <dbReference type="Rhea" id="RHEA:49574"/>
    </physiologicalReaction>
</comment>
<comment type="pathway">
    <text evidence="1">Porphyrin-containing compound metabolism; protoheme biosynthesis.</text>
</comment>
<comment type="subcellular location">
    <subcellularLocation>
        <location evidence="1">Cytoplasm</location>
    </subcellularLocation>
</comment>
<comment type="similarity">
    <text evidence="1">Belongs to the ferrochelatase family.</text>
</comment>
<keyword id="KW-0963">Cytoplasm</keyword>
<keyword id="KW-0350">Heme biosynthesis</keyword>
<keyword id="KW-0408">Iron</keyword>
<keyword id="KW-0456">Lyase</keyword>
<keyword id="KW-0479">Metal-binding</keyword>
<keyword id="KW-0627">Porphyrin biosynthesis</keyword>
<sequence>MTKKMGLLVVAYGTPYKESDIEPYYTDIRHGKRPSEEELQDLKDRYEFIGGLSPLAGTTDDQADALVSALNKAYADVEFKLYLGLKHISPFIEDAVEQMHKDGITEAITVVLAPHYSSFSVGSYDKRADEEAAKYGIQLTHVKHYYEQPKFIEYWTNKVNETLAQIPEEEHKDTVLVVSAHSLPKGLIEKNNDPYPQELEHTALLIKEQSNIEHIAIGWQSEGNTGTPWLGPDVQDLTRDLYEKHQYKNFIYTPVGFVCEHLEVLYDNDYECKVVCDDIGANYYRPKMPNTHPLFIGAIVDEIKSIF</sequence>
<protein>
    <recommendedName>
        <fullName evidence="1">Coproporphyrin III ferrochelatase</fullName>
        <ecNumber evidence="1">4.99.1.9</ecNumber>
    </recommendedName>
</protein>
<name>CPFC_STAAR</name>